<reference key="1">
    <citation type="journal article" date="1998" name="Proc. Natl. Acad. Sci. U.S.A.">
        <title>Twenty proteins containing a C-terminal SOCS box form five structural classes.</title>
        <authorList>
            <person name="Hilton D.J."/>
            <person name="Richardson R.T."/>
            <person name="Alexander W.S."/>
            <person name="Viney E.M."/>
            <person name="Willson T.A."/>
            <person name="Sprigg N.S."/>
            <person name="Starr R."/>
            <person name="Nicholson S.E."/>
            <person name="Metcalf D."/>
            <person name="Nicola N.A."/>
        </authorList>
    </citation>
    <scope>NUCLEOTIDE SEQUENCE [MRNA]</scope>
    <source>
        <strain>C57BL/6J</strain>
        <tissue>Spleen</tissue>
    </source>
</reference>
<reference key="2">
    <citation type="journal article" date="1999" name="Mech. Dev.">
        <title>SWiP-1: novel SOCS box containing WD-protein regulated by signalling centres and by Shh during development.</title>
        <authorList>
            <person name="Vasiliauskas D."/>
            <person name="Hancock S."/>
            <person name="Stern C.D."/>
        </authorList>
    </citation>
    <scope>NUCLEOTIDE SEQUENCE [MRNA]</scope>
</reference>
<reference key="3">
    <citation type="journal article" date="2005" name="Science">
        <title>The transcriptional landscape of the mammalian genome.</title>
        <authorList>
            <person name="Carninci P."/>
            <person name="Kasukawa T."/>
            <person name="Katayama S."/>
            <person name="Gough J."/>
            <person name="Frith M.C."/>
            <person name="Maeda N."/>
            <person name="Oyama R."/>
            <person name="Ravasi T."/>
            <person name="Lenhard B."/>
            <person name="Wells C."/>
            <person name="Kodzius R."/>
            <person name="Shimokawa K."/>
            <person name="Bajic V.B."/>
            <person name="Brenner S.E."/>
            <person name="Batalov S."/>
            <person name="Forrest A.R."/>
            <person name="Zavolan M."/>
            <person name="Davis M.J."/>
            <person name="Wilming L.G."/>
            <person name="Aidinis V."/>
            <person name="Allen J.E."/>
            <person name="Ambesi-Impiombato A."/>
            <person name="Apweiler R."/>
            <person name="Aturaliya R.N."/>
            <person name="Bailey T.L."/>
            <person name="Bansal M."/>
            <person name="Baxter L."/>
            <person name="Beisel K.W."/>
            <person name="Bersano T."/>
            <person name="Bono H."/>
            <person name="Chalk A.M."/>
            <person name="Chiu K.P."/>
            <person name="Choudhary V."/>
            <person name="Christoffels A."/>
            <person name="Clutterbuck D.R."/>
            <person name="Crowe M.L."/>
            <person name="Dalla E."/>
            <person name="Dalrymple B.P."/>
            <person name="de Bono B."/>
            <person name="Della Gatta G."/>
            <person name="di Bernardo D."/>
            <person name="Down T."/>
            <person name="Engstrom P."/>
            <person name="Fagiolini M."/>
            <person name="Faulkner G."/>
            <person name="Fletcher C.F."/>
            <person name="Fukushima T."/>
            <person name="Furuno M."/>
            <person name="Futaki S."/>
            <person name="Gariboldi M."/>
            <person name="Georgii-Hemming P."/>
            <person name="Gingeras T.R."/>
            <person name="Gojobori T."/>
            <person name="Green R.E."/>
            <person name="Gustincich S."/>
            <person name="Harbers M."/>
            <person name="Hayashi Y."/>
            <person name="Hensch T.K."/>
            <person name="Hirokawa N."/>
            <person name="Hill D."/>
            <person name="Huminiecki L."/>
            <person name="Iacono M."/>
            <person name="Ikeo K."/>
            <person name="Iwama A."/>
            <person name="Ishikawa T."/>
            <person name="Jakt M."/>
            <person name="Kanapin A."/>
            <person name="Katoh M."/>
            <person name="Kawasawa Y."/>
            <person name="Kelso J."/>
            <person name="Kitamura H."/>
            <person name="Kitano H."/>
            <person name="Kollias G."/>
            <person name="Krishnan S.P."/>
            <person name="Kruger A."/>
            <person name="Kummerfeld S.K."/>
            <person name="Kurochkin I.V."/>
            <person name="Lareau L.F."/>
            <person name="Lazarevic D."/>
            <person name="Lipovich L."/>
            <person name="Liu J."/>
            <person name="Liuni S."/>
            <person name="McWilliam S."/>
            <person name="Madan Babu M."/>
            <person name="Madera M."/>
            <person name="Marchionni L."/>
            <person name="Matsuda H."/>
            <person name="Matsuzawa S."/>
            <person name="Miki H."/>
            <person name="Mignone F."/>
            <person name="Miyake S."/>
            <person name="Morris K."/>
            <person name="Mottagui-Tabar S."/>
            <person name="Mulder N."/>
            <person name="Nakano N."/>
            <person name="Nakauchi H."/>
            <person name="Ng P."/>
            <person name="Nilsson R."/>
            <person name="Nishiguchi S."/>
            <person name="Nishikawa S."/>
            <person name="Nori F."/>
            <person name="Ohara O."/>
            <person name="Okazaki Y."/>
            <person name="Orlando V."/>
            <person name="Pang K.C."/>
            <person name="Pavan W.J."/>
            <person name="Pavesi G."/>
            <person name="Pesole G."/>
            <person name="Petrovsky N."/>
            <person name="Piazza S."/>
            <person name="Reed J."/>
            <person name="Reid J.F."/>
            <person name="Ring B.Z."/>
            <person name="Ringwald M."/>
            <person name="Rost B."/>
            <person name="Ruan Y."/>
            <person name="Salzberg S.L."/>
            <person name="Sandelin A."/>
            <person name="Schneider C."/>
            <person name="Schoenbach C."/>
            <person name="Sekiguchi K."/>
            <person name="Semple C.A."/>
            <person name="Seno S."/>
            <person name="Sessa L."/>
            <person name="Sheng Y."/>
            <person name="Shibata Y."/>
            <person name="Shimada H."/>
            <person name="Shimada K."/>
            <person name="Silva D."/>
            <person name="Sinclair B."/>
            <person name="Sperling S."/>
            <person name="Stupka E."/>
            <person name="Sugiura K."/>
            <person name="Sultana R."/>
            <person name="Takenaka Y."/>
            <person name="Taki K."/>
            <person name="Tammoja K."/>
            <person name="Tan S.L."/>
            <person name="Tang S."/>
            <person name="Taylor M.S."/>
            <person name="Tegner J."/>
            <person name="Teichmann S.A."/>
            <person name="Ueda H.R."/>
            <person name="van Nimwegen E."/>
            <person name="Verardo R."/>
            <person name="Wei C.L."/>
            <person name="Yagi K."/>
            <person name="Yamanishi H."/>
            <person name="Zabarovsky E."/>
            <person name="Zhu S."/>
            <person name="Zimmer A."/>
            <person name="Hide W."/>
            <person name="Bult C."/>
            <person name="Grimmond S.M."/>
            <person name="Teasdale R.D."/>
            <person name="Liu E.T."/>
            <person name="Brusic V."/>
            <person name="Quackenbush J."/>
            <person name="Wahlestedt C."/>
            <person name="Mattick J.S."/>
            <person name="Hume D.A."/>
            <person name="Kai C."/>
            <person name="Sasaki D."/>
            <person name="Tomaru Y."/>
            <person name="Fukuda S."/>
            <person name="Kanamori-Katayama M."/>
            <person name="Suzuki M."/>
            <person name="Aoki J."/>
            <person name="Arakawa T."/>
            <person name="Iida J."/>
            <person name="Imamura K."/>
            <person name="Itoh M."/>
            <person name="Kato T."/>
            <person name="Kawaji H."/>
            <person name="Kawagashira N."/>
            <person name="Kawashima T."/>
            <person name="Kojima M."/>
            <person name="Kondo S."/>
            <person name="Konno H."/>
            <person name="Nakano K."/>
            <person name="Ninomiya N."/>
            <person name="Nishio T."/>
            <person name="Okada M."/>
            <person name="Plessy C."/>
            <person name="Shibata K."/>
            <person name="Shiraki T."/>
            <person name="Suzuki S."/>
            <person name="Tagami M."/>
            <person name="Waki K."/>
            <person name="Watahiki A."/>
            <person name="Okamura-Oho Y."/>
            <person name="Suzuki H."/>
            <person name="Kawai J."/>
            <person name="Hayashizaki Y."/>
        </authorList>
    </citation>
    <scope>NUCLEOTIDE SEQUENCE [LARGE SCALE MRNA]</scope>
    <source>
        <strain>C57BL/6J</strain>
        <tissue>Inner ear</tissue>
    </source>
</reference>
<reference key="4">
    <citation type="submission" date="2005-09" db="EMBL/GenBank/DDBJ databases">
        <authorList>
            <person name="Mural R.J."/>
            <person name="Adams M.D."/>
            <person name="Myers E.W."/>
            <person name="Smith H.O."/>
            <person name="Venter J.C."/>
        </authorList>
    </citation>
    <scope>NUCLEOTIDE SEQUENCE [LARGE SCALE GENOMIC DNA]</scope>
</reference>
<reference key="5">
    <citation type="journal article" date="2004" name="Genome Res.">
        <title>The status, quality, and expansion of the NIH full-length cDNA project: the Mammalian Gene Collection (MGC).</title>
        <authorList>
            <consortium name="The MGC Project Team"/>
        </authorList>
    </citation>
    <scope>NUCLEOTIDE SEQUENCE [LARGE SCALE MRNA]</scope>
    <source>
        <tissue>Brain</tissue>
    </source>
</reference>
<evidence type="ECO:0000250" key="1"/>
<evidence type="ECO:0000255" key="2">
    <source>
        <dbReference type="PROSITE-ProRule" id="PRU00194"/>
    </source>
</evidence>
<evidence type="ECO:0000305" key="3"/>
<organism>
    <name type="scientific">Mus musculus</name>
    <name type="common">Mouse</name>
    <dbReference type="NCBI Taxonomy" id="10090"/>
    <lineage>
        <taxon>Eukaryota</taxon>
        <taxon>Metazoa</taxon>
        <taxon>Chordata</taxon>
        <taxon>Craniata</taxon>
        <taxon>Vertebrata</taxon>
        <taxon>Euteleostomi</taxon>
        <taxon>Mammalia</taxon>
        <taxon>Eutheria</taxon>
        <taxon>Euarchontoglires</taxon>
        <taxon>Glires</taxon>
        <taxon>Rodentia</taxon>
        <taxon>Myomorpha</taxon>
        <taxon>Muroidea</taxon>
        <taxon>Muridae</taxon>
        <taxon>Murinae</taxon>
        <taxon>Mus</taxon>
        <taxon>Mus</taxon>
    </lineage>
</organism>
<accession>O54929</accession>
<accession>Q6GTI7</accession>
<accession>Q9R1M8</accession>
<feature type="chain" id="PRO_0000051461" description="WD repeat and SOCS box-containing protein 2">
    <location>
        <begin position="1"/>
        <end position="404"/>
    </location>
</feature>
<feature type="repeat" description="WD 1">
    <location>
        <begin position="105"/>
        <end position="148"/>
    </location>
</feature>
<feature type="repeat" description="WD 2">
    <location>
        <begin position="151"/>
        <end position="191"/>
    </location>
</feature>
<feature type="repeat" description="WD 3">
    <location>
        <begin position="195"/>
        <end position="234"/>
    </location>
</feature>
<feature type="repeat" description="WD 4">
    <location>
        <begin position="237"/>
        <end position="276"/>
    </location>
</feature>
<feature type="repeat" description="WD 5">
    <location>
        <begin position="291"/>
        <end position="330"/>
    </location>
</feature>
<feature type="domain" description="SOCS box" evidence="2">
    <location>
        <begin position="356"/>
        <end position="404"/>
    </location>
</feature>
<feature type="sequence conflict" description="In Ref. 1; AAB96649." evidence="3" ref="1">
    <original>E</original>
    <variation>A</variation>
    <location>
        <position position="272"/>
    </location>
</feature>
<name>WSB2_MOUSE</name>
<dbReference type="EMBL" id="AF033188">
    <property type="protein sequence ID" value="AAB96649.1"/>
    <property type="molecule type" value="mRNA"/>
</dbReference>
<dbReference type="EMBL" id="AF072881">
    <property type="protein sequence ID" value="AAD28809.1"/>
    <property type="molecule type" value="mRNA"/>
</dbReference>
<dbReference type="EMBL" id="AK157999">
    <property type="protein sequence ID" value="BAE34309.1"/>
    <property type="molecule type" value="mRNA"/>
</dbReference>
<dbReference type="EMBL" id="CH466529">
    <property type="protein sequence ID" value="EDL19806.1"/>
    <property type="molecule type" value="Genomic_DNA"/>
</dbReference>
<dbReference type="EMBL" id="BC055100">
    <property type="protein sequence ID" value="AAH55100.1"/>
    <property type="molecule type" value="mRNA"/>
</dbReference>
<dbReference type="CCDS" id="CCDS19604.1"/>
<dbReference type="RefSeq" id="NP_067514.2">
    <property type="nucleotide sequence ID" value="NM_021539.4"/>
</dbReference>
<dbReference type="SMR" id="O54929"/>
<dbReference type="BioGRID" id="208507">
    <property type="interactions" value="10"/>
</dbReference>
<dbReference type="FunCoup" id="O54929">
    <property type="interactions" value="35"/>
</dbReference>
<dbReference type="STRING" id="10090.ENSMUSP00000031309"/>
<dbReference type="iPTMnet" id="O54929"/>
<dbReference type="PhosphoSitePlus" id="O54929"/>
<dbReference type="PaxDb" id="10090-ENSMUSP00000031309"/>
<dbReference type="ProteomicsDB" id="299698"/>
<dbReference type="Antibodypedia" id="31364">
    <property type="antibodies" value="97 antibodies from 26 providers"/>
</dbReference>
<dbReference type="DNASU" id="59043"/>
<dbReference type="Ensembl" id="ENSMUST00000031309.16">
    <property type="protein sequence ID" value="ENSMUSP00000031309.10"/>
    <property type="gene ID" value="ENSMUSG00000029364.16"/>
</dbReference>
<dbReference type="GeneID" id="59043"/>
<dbReference type="KEGG" id="mmu:59043"/>
<dbReference type="UCSC" id="uc008zfq.1">
    <property type="organism name" value="mouse"/>
</dbReference>
<dbReference type="AGR" id="MGI:2144041"/>
<dbReference type="CTD" id="55884"/>
<dbReference type="MGI" id="MGI:2144041">
    <property type="gene designation" value="Wsb2"/>
</dbReference>
<dbReference type="VEuPathDB" id="HostDB:ENSMUSG00000029364"/>
<dbReference type="eggNOG" id="KOG0266">
    <property type="taxonomic scope" value="Eukaryota"/>
</dbReference>
<dbReference type="GeneTree" id="ENSGT00890000139406"/>
<dbReference type="HOGENOM" id="CLU_056876_0_0_1"/>
<dbReference type="InParanoid" id="O54929"/>
<dbReference type="OMA" id="GDTDPAC"/>
<dbReference type="OrthoDB" id="6249at9989"/>
<dbReference type="TreeFam" id="TF329216"/>
<dbReference type="Reactome" id="R-MMU-8951664">
    <property type="pathway name" value="Neddylation"/>
</dbReference>
<dbReference type="UniPathway" id="UPA00143"/>
<dbReference type="BioGRID-ORCS" id="59043">
    <property type="hits" value="6 hits in 81 CRISPR screens"/>
</dbReference>
<dbReference type="ChiTaRS" id="Wsb2">
    <property type="organism name" value="mouse"/>
</dbReference>
<dbReference type="PRO" id="PR:O54929"/>
<dbReference type="Proteomes" id="UP000000589">
    <property type="component" value="Chromosome 5"/>
</dbReference>
<dbReference type="RNAct" id="O54929">
    <property type="molecule type" value="protein"/>
</dbReference>
<dbReference type="Bgee" id="ENSMUSG00000029364">
    <property type="expression patterns" value="Expressed in barrel cortex and 271 other cell types or tissues"/>
</dbReference>
<dbReference type="ExpressionAtlas" id="O54929">
    <property type="expression patterns" value="baseline and differential"/>
</dbReference>
<dbReference type="GO" id="GO:0035556">
    <property type="term" value="P:intracellular signal transduction"/>
    <property type="evidence" value="ECO:0007669"/>
    <property type="project" value="InterPro"/>
</dbReference>
<dbReference type="GO" id="GO:0016567">
    <property type="term" value="P:protein ubiquitination"/>
    <property type="evidence" value="ECO:0007669"/>
    <property type="project" value="UniProtKB-UniPathway"/>
</dbReference>
<dbReference type="CDD" id="cd03733">
    <property type="entry name" value="SOCS_WSB_SWIP"/>
    <property type="match status" value="1"/>
</dbReference>
<dbReference type="CDD" id="cd00200">
    <property type="entry name" value="WD40"/>
    <property type="match status" value="1"/>
</dbReference>
<dbReference type="FunFam" id="2.130.10.10:FF:000256">
    <property type="entry name" value="WD repeat and SOCS box containing 2"/>
    <property type="match status" value="1"/>
</dbReference>
<dbReference type="FunFam" id="2.130.10.10:FF:000264">
    <property type="entry name" value="WD repeat and SOCS box containing 2"/>
    <property type="match status" value="1"/>
</dbReference>
<dbReference type="Gene3D" id="1.10.750.20">
    <property type="entry name" value="SOCS box"/>
    <property type="match status" value="1"/>
</dbReference>
<dbReference type="Gene3D" id="2.130.10.10">
    <property type="entry name" value="YVTN repeat-like/Quinoprotein amine dehydrogenase"/>
    <property type="match status" value="2"/>
</dbReference>
<dbReference type="InterPro" id="IPR020472">
    <property type="entry name" value="G-protein_beta_WD-40_rep"/>
</dbReference>
<dbReference type="InterPro" id="IPR001496">
    <property type="entry name" value="SOCS_box"/>
</dbReference>
<dbReference type="InterPro" id="IPR036036">
    <property type="entry name" value="SOCS_box-like_dom_sf"/>
</dbReference>
<dbReference type="InterPro" id="IPR015943">
    <property type="entry name" value="WD40/YVTN_repeat-like_dom_sf"/>
</dbReference>
<dbReference type="InterPro" id="IPR019775">
    <property type="entry name" value="WD40_repeat_CS"/>
</dbReference>
<dbReference type="InterPro" id="IPR036322">
    <property type="entry name" value="WD40_repeat_dom_sf"/>
</dbReference>
<dbReference type="InterPro" id="IPR001680">
    <property type="entry name" value="WD40_rpt"/>
</dbReference>
<dbReference type="InterPro" id="IPR051983">
    <property type="entry name" value="WSB_SOCS-box_domain"/>
</dbReference>
<dbReference type="PANTHER" id="PTHR15622:SF1">
    <property type="entry name" value="WD REPEAT AND SOCS BOX-CONTAINING PROTEIN 2"/>
    <property type="match status" value="1"/>
</dbReference>
<dbReference type="PANTHER" id="PTHR15622">
    <property type="entry name" value="WD40 REPEAT PROTEIN"/>
    <property type="match status" value="1"/>
</dbReference>
<dbReference type="Pfam" id="PF07525">
    <property type="entry name" value="SOCS_box"/>
    <property type="match status" value="1"/>
</dbReference>
<dbReference type="Pfam" id="PF00400">
    <property type="entry name" value="WD40"/>
    <property type="match status" value="5"/>
</dbReference>
<dbReference type="PRINTS" id="PR00320">
    <property type="entry name" value="GPROTEINBRPT"/>
</dbReference>
<dbReference type="SMART" id="SM00253">
    <property type="entry name" value="SOCS"/>
    <property type="match status" value="1"/>
</dbReference>
<dbReference type="SMART" id="SM00969">
    <property type="entry name" value="SOCS_box"/>
    <property type="match status" value="1"/>
</dbReference>
<dbReference type="SMART" id="SM00320">
    <property type="entry name" value="WD40"/>
    <property type="match status" value="6"/>
</dbReference>
<dbReference type="SUPFAM" id="SSF158235">
    <property type="entry name" value="SOCS box-like"/>
    <property type="match status" value="1"/>
</dbReference>
<dbReference type="SUPFAM" id="SSF50978">
    <property type="entry name" value="WD40 repeat-like"/>
    <property type="match status" value="1"/>
</dbReference>
<dbReference type="PROSITE" id="PS50225">
    <property type="entry name" value="SOCS"/>
    <property type="match status" value="1"/>
</dbReference>
<dbReference type="PROSITE" id="PS00678">
    <property type="entry name" value="WD_REPEATS_1"/>
    <property type="match status" value="2"/>
</dbReference>
<dbReference type="PROSITE" id="PS50082">
    <property type="entry name" value="WD_REPEATS_2"/>
    <property type="match status" value="5"/>
</dbReference>
<dbReference type="PROSITE" id="PS50294">
    <property type="entry name" value="WD_REPEATS_REGION"/>
    <property type="match status" value="1"/>
</dbReference>
<sequence>MEAGEEPLLLAELKPGRPHQFDWKSSCETWSVAFSPDGSWFAWSQGHCVVKLVPWPLEEQFIPKGFEAKSRSSKNDPKGRGSLKEKTLDCGQIVWGLAFSPWPSPPSRKLWARHHPQAPDVSCLILATGLNDGQIKIWEVQTGLLLLNLSGHQDVVRDLSFTPSGSLILVSASRDKTLRIWDLNKHGKQIQVLSGHLQWVYCCSISPDCSMLCSAAGEKSVFLWSMRSYTLIRKLEGHQSSVVSCDFSPDSALLVTASYDTSVIMWDPYTGERLRSLHHTQLEPTMDDSDVHMSSLRSVCFSPEGLYLATVADDRLLRIWALELKAPVAFAPMTNGLCCTFFPHGGIIATGTRDGHVQFWTAPRVLSSLKHLCRKALRSFLTTYQVLALPIPKKMKEFLTYRTF</sequence>
<protein>
    <recommendedName>
        <fullName>WD repeat and SOCS box-containing protein 2</fullName>
        <shortName>WSB-2</shortName>
    </recommendedName>
    <alternativeName>
        <fullName>SOCS box-containing WD protein SWiP-2</fullName>
    </alternativeName>
</protein>
<comment type="function">
    <text evidence="1">May be a substrate-recognition component of a SCF-like ECS (Elongin-Cullin-SOCS-box protein) E3 ubiquitin ligase complex which mediates the ubiquitination and subsequent proteasomal degradation of target proteins.</text>
</comment>
<comment type="pathway">
    <text>Protein modification; protein ubiquitination.</text>
</comment>
<comment type="domain">
    <text evidence="1">The SOCS box domain mediates the interaction with the Elongin BC complex, an adapter module in different E3 ubiquitin ligase complexes.</text>
</comment>
<proteinExistence type="evidence at transcript level"/>
<gene>
    <name type="primary">Wsb2</name>
    <name type="synonym">Swip2</name>
</gene>
<keyword id="KW-1185">Reference proteome</keyword>
<keyword id="KW-0677">Repeat</keyword>
<keyword id="KW-0833">Ubl conjugation pathway</keyword>
<keyword id="KW-0853">WD repeat</keyword>